<gene>
    <name evidence="1" type="primary">thyA</name>
    <name type="ordered locus">ECP_2840</name>
</gene>
<comment type="function">
    <text evidence="1">Catalyzes the reductive methylation of 2'-deoxyuridine-5'-monophosphate (dUMP) to 2'-deoxythymidine-5'-monophosphate (dTMP) while utilizing 5,10-methylenetetrahydrofolate (mTHF) as the methyl donor and reductant in the reaction, yielding dihydrofolate (DHF) as a by-product. This enzymatic reaction provides an intracellular de novo source of dTMP, an essential precursor for DNA biosynthesis.</text>
</comment>
<comment type="catalytic activity">
    <reaction evidence="1">
        <text>dUMP + (6R)-5,10-methylene-5,6,7,8-tetrahydrofolate = 7,8-dihydrofolate + dTMP</text>
        <dbReference type="Rhea" id="RHEA:12104"/>
        <dbReference type="ChEBI" id="CHEBI:15636"/>
        <dbReference type="ChEBI" id="CHEBI:57451"/>
        <dbReference type="ChEBI" id="CHEBI:63528"/>
        <dbReference type="ChEBI" id="CHEBI:246422"/>
        <dbReference type="EC" id="2.1.1.45"/>
    </reaction>
</comment>
<comment type="pathway">
    <text evidence="1">Pyrimidine metabolism; dTTP biosynthesis.</text>
</comment>
<comment type="subunit">
    <text evidence="1">Homodimer.</text>
</comment>
<comment type="subcellular location">
    <subcellularLocation>
        <location evidence="1">Cytoplasm</location>
    </subcellularLocation>
</comment>
<comment type="similarity">
    <text evidence="1">Belongs to the thymidylate synthase family. Bacterial-type ThyA subfamily.</text>
</comment>
<evidence type="ECO:0000255" key="1">
    <source>
        <dbReference type="HAMAP-Rule" id="MF_00008"/>
    </source>
</evidence>
<dbReference type="EC" id="2.1.1.45" evidence="1"/>
<dbReference type="EMBL" id="CP000247">
    <property type="protein sequence ID" value="ABG70824.1"/>
    <property type="molecule type" value="Genomic_DNA"/>
</dbReference>
<dbReference type="RefSeq" id="WP_000816232.1">
    <property type="nucleotide sequence ID" value="NC_008253.1"/>
</dbReference>
<dbReference type="SMR" id="Q0TE05"/>
<dbReference type="GeneID" id="93779171"/>
<dbReference type="KEGG" id="ecp:ECP_2840"/>
<dbReference type="HOGENOM" id="CLU_021669_0_0_6"/>
<dbReference type="UniPathway" id="UPA00575"/>
<dbReference type="Proteomes" id="UP000009182">
    <property type="component" value="Chromosome"/>
</dbReference>
<dbReference type="GO" id="GO:0005829">
    <property type="term" value="C:cytosol"/>
    <property type="evidence" value="ECO:0007669"/>
    <property type="project" value="TreeGrafter"/>
</dbReference>
<dbReference type="GO" id="GO:0004799">
    <property type="term" value="F:thymidylate synthase activity"/>
    <property type="evidence" value="ECO:0007669"/>
    <property type="project" value="UniProtKB-UniRule"/>
</dbReference>
<dbReference type="GO" id="GO:0006231">
    <property type="term" value="P:dTMP biosynthetic process"/>
    <property type="evidence" value="ECO:0007669"/>
    <property type="project" value="UniProtKB-UniRule"/>
</dbReference>
<dbReference type="GO" id="GO:0006235">
    <property type="term" value="P:dTTP biosynthetic process"/>
    <property type="evidence" value="ECO:0007669"/>
    <property type="project" value="UniProtKB-UniRule"/>
</dbReference>
<dbReference type="GO" id="GO:0032259">
    <property type="term" value="P:methylation"/>
    <property type="evidence" value="ECO:0007669"/>
    <property type="project" value="UniProtKB-KW"/>
</dbReference>
<dbReference type="CDD" id="cd00351">
    <property type="entry name" value="TS_Pyrimidine_HMase"/>
    <property type="match status" value="1"/>
</dbReference>
<dbReference type="FunFam" id="3.30.572.10:FF:000001">
    <property type="entry name" value="Thymidylate synthase"/>
    <property type="match status" value="1"/>
</dbReference>
<dbReference type="Gene3D" id="3.30.572.10">
    <property type="entry name" value="Thymidylate synthase/dCMP hydroxymethylase domain"/>
    <property type="match status" value="1"/>
</dbReference>
<dbReference type="HAMAP" id="MF_00008">
    <property type="entry name" value="Thymidy_synth_bact"/>
    <property type="match status" value="1"/>
</dbReference>
<dbReference type="InterPro" id="IPR045097">
    <property type="entry name" value="Thymidate_synth/dCMP_Mease"/>
</dbReference>
<dbReference type="InterPro" id="IPR023451">
    <property type="entry name" value="Thymidate_synth/dCMP_Mease_dom"/>
</dbReference>
<dbReference type="InterPro" id="IPR036926">
    <property type="entry name" value="Thymidate_synth/dCMP_Mease_sf"/>
</dbReference>
<dbReference type="InterPro" id="IPR000398">
    <property type="entry name" value="Thymidylate_synthase"/>
</dbReference>
<dbReference type="InterPro" id="IPR020940">
    <property type="entry name" value="Thymidylate_synthase_AS"/>
</dbReference>
<dbReference type="NCBIfam" id="NF002497">
    <property type="entry name" value="PRK01827.1-3"/>
    <property type="match status" value="1"/>
</dbReference>
<dbReference type="NCBIfam" id="NF002499">
    <property type="entry name" value="PRK01827.1-5"/>
    <property type="match status" value="1"/>
</dbReference>
<dbReference type="NCBIfam" id="TIGR03284">
    <property type="entry name" value="thym_sym"/>
    <property type="match status" value="2"/>
</dbReference>
<dbReference type="PANTHER" id="PTHR11548:SF9">
    <property type="entry name" value="THYMIDYLATE SYNTHASE"/>
    <property type="match status" value="1"/>
</dbReference>
<dbReference type="PANTHER" id="PTHR11548">
    <property type="entry name" value="THYMIDYLATE SYNTHASE 1"/>
    <property type="match status" value="1"/>
</dbReference>
<dbReference type="Pfam" id="PF00303">
    <property type="entry name" value="Thymidylat_synt"/>
    <property type="match status" value="1"/>
</dbReference>
<dbReference type="PRINTS" id="PR00108">
    <property type="entry name" value="THYMDSNTHASE"/>
</dbReference>
<dbReference type="SUPFAM" id="SSF55831">
    <property type="entry name" value="Thymidylate synthase/dCMP hydroxymethylase"/>
    <property type="match status" value="1"/>
</dbReference>
<dbReference type="PROSITE" id="PS00091">
    <property type="entry name" value="THYMIDYLATE_SYNTHASE"/>
    <property type="match status" value="1"/>
</dbReference>
<protein>
    <recommendedName>
        <fullName evidence="1">Thymidylate synthase</fullName>
        <shortName evidence="1">TS</shortName>
        <shortName evidence="1">TSase</shortName>
        <ecNumber evidence="1">2.1.1.45</ecNumber>
    </recommendedName>
</protein>
<accession>Q0TE05</accession>
<name>TYSY_ECOL5</name>
<reference key="1">
    <citation type="journal article" date="2006" name="Mol. Microbiol.">
        <title>Role of pathogenicity island-associated integrases in the genome plasticity of uropathogenic Escherichia coli strain 536.</title>
        <authorList>
            <person name="Hochhut B."/>
            <person name="Wilde C."/>
            <person name="Balling G."/>
            <person name="Middendorf B."/>
            <person name="Dobrindt U."/>
            <person name="Brzuszkiewicz E."/>
            <person name="Gottschalk G."/>
            <person name="Carniel E."/>
            <person name="Hacker J."/>
        </authorList>
    </citation>
    <scope>NUCLEOTIDE SEQUENCE [LARGE SCALE GENOMIC DNA]</scope>
    <source>
        <strain>536 / UPEC</strain>
    </source>
</reference>
<proteinExistence type="inferred from homology"/>
<keyword id="KW-0963">Cytoplasm</keyword>
<keyword id="KW-0489">Methyltransferase</keyword>
<keyword id="KW-0545">Nucleotide biosynthesis</keyword>
<keyword id="KW-0808">Transferase</keyword>
<sequence length="264" mass="30480">MKQYLELMQKVLDEGTQKNDRTGTGTLSIFGHQMRFNLQDGFPLVTTKRCHLRSIIHELLWFLQGDTNIAYLHENNVTIWDEWADENGDLGPVYGKQWRAWPTPDGRHIDQITTVLNQLKNDPDSRRIIVSAWNVGELDKMALAPCHAFFQFYVADGKLSCQLYQRSCDVFLGLPFNIASYALLVHMMAQQCDLEVGDFVWTGGDTHLYSNHMDQTHLQLSREPRPLPKLIIKRKPESIFDYRFEDFEIEGYDPHPGIKAPVAI</sequence>
<feature type="chain" id="PRO_1000000593" description="Thymidylate synthase">
    <location>
        <begin position="1"/>
        <end position="264"/>
    </location>
</feature>
<feature type="active site" description="Nucleophile" evidence="1">
    <location>
        <position position="146"/>
    </location>
</feature>
<feature type="binding site" description="in other chain" evidence="1">
    <location>
        <position position="21"/>
    </location>
    <ligand>
        <name>dUMP</name>
        <dbReference type="ChEBI" id="CHEBI:246422"/>
        <note>ligand shared between dimeric partners</note>
    </ligand>
</feature>
<feature type="binding site" evidence="1">
    <location>
        <position position="51"/>
    </location>
    <ligand>
        <name>(6R)-5,10-methylene-5,6,7,8-tetrahydrofolate</name>
        <dbReference type="ChEBI" id="CHEBI:15636"/>
    </ligand>
</feature>
<feature type="binding site" evidence="1">
    <location>
        <begin position="126"/>
        <end position="127"/>
    </location>
    <ligand>
        <name>dUMP</name>
        <dbReference type="ChEBI" id="CHEBI:246422"/>
        <note>ligand shared between dimeric partners</note>
    </ligand>
</feature>
<feature type="binding site" description="in other chain" evidence="1">
    <location>
        <begin position="166"/>
        <end position="169"/>
    </location>
    <ligand>
        <name>dUMP</name>
        <dbReference type="ChEBI" id="CHEBI:246422"/>
        <note>ligand shared between dimeric partners</note>
    </ligand>
</feature>
<feature type="binding site" evidence="1">
    <location>
        <position position="169"/>
    </location>
    <ligand>
        <name>(6R)-5,10-methylene-5,6,7,8-tetrahydrofolate</name>
        <dbReference type="ChEBI" id="CHEBI:15636"/>
    </ligand>
</feature>
<feature type="binding site" description="in other chain" evidence="1">
    <location>
        <position position="177"/>
    </location>
    <ligand>
        <name>dUMP</name>
        <dbReference type="ChEBI" id="CHEBI:246422"/>
        <note>ligand shared between dimeric partners</note>
    </ligand>
</feature>
<feature type="binding site" description="in other chain" evidence="1">
    <location>
        <begin position="207"/>
        <end position="209"/>
    </location>
    <ligand>
        <name>dUMP</name>
        <dbReference type="ChEBI" id="CHEBI:246422"/>
        <note>ligand shared between dimeric partners</note>
    </ligand>
</feature>
<feature type="binding site" evidence="1">
    <location>
        <position position="263"/>
    </location>
    <ligand>
        <name>(6R)-5,10-methylene-5,6,7,8-tetrahydrofolate</name>
        <dbReference type="ChEBI" id="CHEBI:15636"/>
    </ligand>
</feature>
<organism>
    <name type="scientific">Escherichia coli O6:K15:H31 (strain 536 / UPEC)</name>
    <dbReference type="NCBI Taxonomy" id="362663"/>
    <lineage>
        <taxon>Bacteria</taxon>
        <taxon>Pseudomonadati</taxon>
        <taxon>Pseudomonadota</taxon>
        <taxon>Gammaproteobacteria</taxon>
        <taxon>Enterobacterales</taxon>
        <taxon>Enterobacteriaceae</taxon>
        <taxon>Escherichia</taxon>
    </lineage>
</organism>